<evidence type="ECO:0000255" key="1">
    <source>
        <dbReference type="HAMAP-Rule" id="MF_00040"/>
    </source>
</evidence>
<evidence type="ECO:0000256" key="2">
    <source>
        <dbReference type="SAM" id="MobiDB-lite"/>
    </source>
</evidence>
<sequence>MNNETIAKAKRNMNKSIEVYQSNLATVRAGVANASLLDRVMVEYYGVPTPLVQMAGITIPEPRVLMITPYDKTSLNDIEHAILASDLGLTPANDGNVIRLIIPQLTGERRQEIAKEVGKLAEEAKIAVRNVRQEAMKALKKQEKDGEITEDEERRLEKEVQKVTDESTKKIDQMADNKRKEIIQG</sequence>
<accession>Q1G9N9</accession>
<reference key="1">
    <citation type="journal article" date="2006" name="Proc. Natl. Acad. Sci. U.S.A.">
        <title>The complete genome sequence of Lactobacillus bulgaricus reveals extensive and ongoing reductive evolution.</title>
        <authorList>
            <person name="van de Guchte M."/>
            <person name="Penaud S."/>
            <person name="Grimaldi C."/>
            <person name="Barbe V."/>
            <person name="Bryson K."/>
            <person name="Nicolas P."/>
            <person name="Robert C."/>
            <person name="Oztas S."/>
            <person name="Mangenot S."/>
            <person name="Couloux A."/>
            <person name="Loux V."/>
            <person name="Dervyn R."/>
            <person name="Bossy R."/>
            <person name="Bolotin A."/>
            <person name="Batto J.-M."/>
            <person name="Walunas T."/>
            <person name="Gibrat J.-F."/>
            <person name="Bessieres P."/>
            <person name="Weissenbach J."/>
            <person name="Ehrlich S.D."/>
            <person name="Maguin E."/>
        </authorList>
    </citation>
    <scope>NUCLEOTIDE SEQUENCE [LARGE SCALE GENOMIC DNA]</scope>
    <source>
        <strain>ATCC 11842 / DSM 20081 / BCRC 10696 / JCM 1002 / NBRC 13953 / NCIMB 11778 / NCTC 12712 / WDCM 00102 / Lb 14</strain>
    </source>
</reference>
<protein>
    <recommendedName>
        <fullName evidence="1">Ribosome-recycling factor</fullName>
        <shortName evidence="1">RRF</shortName>
    </recommendedName>
    <alternativeName>
        <fullName evidence="1">Ribosome-releasing factor</fullName>
    </alternativeName>
</protein>
<organism>
    <name type="scientific">Lactobacillus delbrueckii subsp. bulgaricus (strain ATCC 11842 / DSM 20081 / BCRC 10696 / JCM 1002 / NBRC 13953 / NCIMB 11778 / NCTC 12712 / WDCM 00102 / Lb 14)</name>
    <dbReference type="NCBI Taxonomy" id="390333"/>
    <lineage>
        <taxon>Bacteria</taxon>
        <taxon>Bacillati</taxon>
        <taxon>Bacillota</taxon>
        <taxon>Bacilli</taxon>
        <taxon>Lactobacillales</taxon>
        <taxon>Lactobacillaceae</taxon>
        <taxon>Lactobacillus</taxon>
    </lineage>
</organism>
<proteinExistence type="inferred from homology"/>
<dbReference type="EMBL" id="CR954253">
    <property type="protein sequence ID" value="CAI98143.1"/>
    <property type="molecule type" value="Genomic_DNA"/>
</dbReference>
<dbReference type="RefSeq" id="WP_004560781.1">
    <property type="nucleotide sequence ID" value="NZ_JQAV01000006.1"/>
</dbReference>
<dbReference type="SMR" id="Q1G9N9"/>
<dbReference type="STRING" id="390333.Ldb1342"/>
<dbReference type="KEGG" id="ldb:Ldb1342"/>
<dbReference type="PATRIC" id="fig|390333.13.peg.1709"/>
<dbReference type="eggNOG" id="COG0233">
    <property type="taxonomic scope" value="Bacteria"/>
</dbReference>
<dbReference type="HOGENOM" id="CLU_073981_2_0_9"/>
<dbReference type="BioCyc" id="LDEL390333:LDB_RS05745-MONOMER"/>
<dbReference type="Proteomes" id="UP000001259">
    <property type="component" value="Chromosome"/>
</dbReference>
<dbReference type="GO" id="GO:0005737">
    <property type="term" value="C:cytoplasm"/>
    <property type="evidence" value="ECO:0007669"/>
    <property type="project" value="UniProtKB-SubCell"/>
</dbReference>
<dbReference type="GO" id="GO:0043023">
    <property type="term" value="F:ribosomal large subunit binding"/>
    <property type="evidence" value="ECO:0007669"/>
    <property type="project" value="TreeGrafter"/>
</dbReference>
<dbReference type="GO" id="GO:0006415">
    <property type="term" value="P:translational termination"/>
    <property type="evidence" value="ECO:0007669"/>
    <property type="project" value="UniProtKB-UniRule"/>
</dbReference>
<dbReference type="CDD" id="cd00520">
    <property type="entry name" value="RRF"/>
    <property type="match status" value="1"/>
</dbReference>
<dbReference type="FunFam" id="1.10.132.20:FF:000001">
    <property type="entry name" value="Ribosome-recycling factor"/>
    <property type="match status" value="1"/>
</dbReference>
<dbReference type="FunFam" id="3.30.1360.40:FF:000001">
    <property type="entry name" value="Ribosome-recycling factor"/>
    <property type="match status" value="1"/>
</dbReference>
<dbReference type="Gene3D" id="3.30.1360.40">
    <property type="match status" value="1"/>
</dbReference>
<dbReference type="Gene3D" id="1.10.132.20">
    <property type="entry name" value="Ribosome-recycling factor"/>
    <property type="match status" value="1"/>
</dbReference>
<dbReference type="HAMAP" id="MF_00040">
    <property type="entry name" value="RRF"/>
    <property type="match status" value="1"/>
</dbReference>
<dbReference type="InterPro" id="IPR002661">
    <property type="entry name" value="Ribosome_recyc_fac"/>
</dbReference>
<dbReference type="InterPro" id="IPR023584">
    <property type="entry name" value="Ribosome_recyc_fac_dom"/>
</dbReference>
<dbReference type="InterPro" id="IPR036191">
    <property type="entry name" value="RRF_sf"/>
</dbReference>
<dbReference type="NCBIfam" id="TIGR00496">
    <property type="entry name" value="frr"/>
    <property type="match status" value="1"/>
</dbReference>
<dbReference type="PANTHER" id="PTHR20982:SF3">
    <property type="entry name" value="MITOCHONDRIAL RIBOSOME RECYCLING FACTOR PSEUDO 1"/>
    <property type="match status" value="1"/>
</dbReference>
<dbReference type="PANTHER" id="PTHR20982">
    <property type="entry name" value="RIBOSOME RECYCLING FACTOR"/>
    <property type="match status" value="1"/>
</dbReference>
<dbReference type="Pfam" id="PF01765">
    <property type="entry name" value="RRF"/>
    <property type="match status" value="1"/>
</dbReference>
<dbReference type="SUPFAM" id="SSF55194">
    <property type="entry name" value="Ribosome recycling factor, RRF"/>
    <property type="match status" value="1"/>
</dbReference>
<comment type="function">
    <text evidence="1">Responsible for the release of ribosomes from messenger RNA at the termination of protein biosynthesis. May increase the efficiency of translation by recycling ribosomes from one round of translation to another.</text>
</comment>
<comment type="subcellular location">
    <subcellularLocation>
        <location evidence="1">Cytoplasm</location>
    </subcellularLocation>
</comment>
<comment type="similarity">
    <text evidence="1">Belongs to the RRF family.</text>
</comment>
<keyword id="KW-0963">Cytoplasm</keyword>
<keyword id="KW-0648">Protein biosynthesis</keyword>
<keyword id="KW-1185">Reference proteome</keyword>
<gene>
    <name evidence="1" type="primary">frr</name>
    <name type="ordered locus">Ldb1342</name>
</gene>
<name>RRF_LACDA</name>
<feature type="chain" id="PRO_1000003182" description="Ribosome-recycling factor">
    <location>
        <begin position="1"/>
        <end position="185"/>
    </location>
</feature>
<feature type="region of interest" description="Disordered" evidence="2">
    <location>
        <begin position="138"/>
        <end position="185"/>
    </location>
</feature>